<accession>Q197A4</accession>
<reference key="1">
    <citation type="journal article" date="2006" name="J. Virol.">
        <title>Genome of invertebrate iridescent virus type 3 (mosquito iridescent virus).</title>
        <authorList>
            <person name="Delhon G."/>
            <person name="Tulman E.R."/>
            <person name="Afonso C.L."/>
            <person name="Lu Z."/>
            <person name="Becnel J.J."/>
            <person name="Moser B.A."/>
            <person name="Kutish G.F."/>
            <person name="Rock D.L."/>
        </authorList>
    </citation>
    <scope>NUCLEOTIDE SEQUENCE [LARGE SCALE GENOMIC DNA]</scope>
</reference>
<dbReference type="EMBL" id="DQ643392">
    <property type="protein sequence ID" value="ABF82086.1"/>
    <property type="molecule type" value="Genomic_DNA"/>
</dbReference>
<dbReference type="RefSeq" id="YP_654628.1">
    <property type="nucleotide sequence ID" value="NC_008187.1"/>
</dbReference>
<dbReference type="SMR" id="Q197A4"/>
<dbReference type="KEGG" id="vg:4156306"/>
<dbReference type="OrthoDB" id="8883at10239"/>
<dbReference type="Proteomes" id="UP000001358">
    <property type="component" value="Genome"/>
</dbReference>
<dbReference type="InterPro" id="IPR043872">
    <property type="entry name" value="DUF5832"/>
</dbReference>
<dbReference type="Pfam" id="PF19150">
    <property type="entry name" value="DUF5832"/>
    <property type="match status" value="1"/>
</dbReference>
<name>VF287_IIV3</name>
<evidence type="ECO:0000255" key="1"/>
<evidence type="ECO:0000305" key="2"/>
<sequence>MDTLLHKDTIVAEWCDEIITRQSRENHNSLVGFRDRNRVVKHHIQQILDHLKGQNISKLAHVQDPKIAEALRTLIAWLKSNERFRPSTEPPLTDRQLEEAFSQLYLGDWAYVDRKYDDPVIPGQNFALFSFLPTVGAQPDADGVYGFLKIRGTFDRAEQAEDKARELIQYFTANTIKACKVGTPVPVAISQPSTEAIEIPPPKNGPFETDGPTDLKYQQLIQAQSMDEQKQIQEIYQNVEKLKEDVTKNPANKEPMQVYLELLQKMATCAWTYSQAQKTKDDMKSIILSDRLKLEEMDQKYPHLQNEYRKVYDEKNQQLGLDQCSDDMALGIRKYFGSRADLDF</sequence>
<keyword id="KW-0175">Coiled coil</keyword>
<keyword id="KW-1185">Reference proteome</keyword>
<feature type="chain" id="PRO_0000377778" description="Uncharacterized protein 056L">
    <location>
        <begin position="1"/>
        <end position="344"/>
    </location>
</feature>
<feature type="coiled-coil region" evidence="1">
    <location>
        <begin position="221"/>
        <end position="249"/>
    </location>
</feature>
<comment type="similarity">
    <text evidence="2">Belongs to the IIV-6 287R family.</text>
</comment>
<organismHost>
    <name type="scientific">Aedes vexans</name>
    <name type="common">Inland floodwater mosquito</name>
    <name type="synonym">Culex vexans</name>
    <dbReference type="NCBI Taxonomy" id="7163"/>
</organismHost>
<organismHost>
    <name type="scientific">Culex territans</name>
    <dbReference type="NCBI Taxonomy" id="42431"/>
</organismHost>
<organismHost>
    <name type="scientific">Culiseta annulata</name>
    <dbReference type="NCBI Taxonomy" id="332058"/>
</organismHost>
<organismHost>
    <name type="scientific">Ochlerotatus sollicitans</name>
    <name type="common">eastern saltmarsh mosquito</name>
    <dbReference type="NCBI Taxonomy" id="310513"/>
</organismHost>
<organismHost>
    <name type="scientific">Ochlerotatus taeniorhynchus</name>
    <name type="common">Black salt marsh mosquito</name>
    <name type="synonym">Aedes taeniorhynchus</name>
    <dbReference type="NCBI Taxonomy" id="329105"/>
</organismHost>
<organismHost>
    <name type="scientific">Psorophora ferox</name>
    <dbReference type="NCBI Taxonomy" id="7183"/>
</organismHost>
<gene>
    <name type="ORF">IIV3-056L</name>
</gene>
<proteinExistence type="inferred from homology"/>
<organism>
    <name type="scientific">Invertebrate iridescent virus 3</name>
    <name type="common">IIV-3</name>
    <name type="synonym">Mosquito iridescent virus</name>
    <dbReference type="NCBI Taxonomy" id="345201"/>
    <lineage>
        <taxon>Viruses</taxon>
        <taxon>Varidnaviria</taxon>
        <taxon>Bamfordvirae</taxon>
        <taxon>Nucleocytoviricota</taxon>
        <taxon>Megaviricetes</taxon>
        <taxon>Pimascovirales</taxon>
        <taxon>Iridoviridae</taxon>
        <taxon>Betairidovirinae</taxon>
        <taxon>Chloriridovirus</taxon>
    </lineage>
</organism>
<protein>
    <recommendedName>
        <fullName>Uncharacterized protein 056L</fullName>
    </recommendedName>
</protein>